<organism>
    <name type="scientific">Nostoc punctiforme (strain ATCC 29133 / PCC 73102)</name>
    <dbReference type="NCBI Taxonomy" id="63737"/>
    <lineage>
        <taxon>Bacteria</taxon>
        <taxon>Bacillati</taxon>
        <taxon>Cyanobacteriota</taxon>
        <taxon>Cyanophyceae</taxon>
        <taxon>Nostocales</taxon>
        <taxon>Nostocaceae</taxon>
        <taxon>Nostoc</taxon>
    </lineage>
</organism>
<protein>
    <recommendedName>
        <fullName evidence="1">Arginine--tRNA ligase</fullName>
        <ecNumber evidence="1">6.1.1.19</ecNumber>
    </recommendedName>
    <alternativeName>
        <fullName evidence="1">Arginyl-tRNA synthetase</fullName>
        <shortName evidence="1">ArgRS</shortName>
    </alternativeName>
</protein>
<reference key="1">
    <citation type="journal article" date="2013" name="Plant Physiol.">
        <title>A Nostoc punctiforme Sugar Transporter Necessary to Establish a Cyanobacterium-Plant Symbiosis.</title>
        <authorList>
            <person name="Ekman M."/>
            <person name="Picossi S."/>
            <person name="Campbell E.L."/>
            <person name="Meeks J.C."/>
            <person name="Flores E."/>
        </authorList>
    </citation>
    <scope>NUCLEOTIDE SEQUENCE [LARGE SCALE GENOMIC DNA]</scope>
    <source>
        <strain>ATCC 29133 / PCC 73102</strain>
    </source>
</reference>
<dbReference type="EC" id="6.1.1.19" evidence="1"/>
<dbReference type="EMBL" id="CP001037">
    <property type="protein sequence ID" value="ACC82385.1"/>
    <property type="molecule type" value="Genomic_DNA"/>
</dbReference>
<dbReference type="RefSeq" id="WP_012410352.1">
    <property type="nucleotide sequence ID" value="NC_010628.1"/>
</dbReference>
<dbReference type="SMR" id="B2J6I0"/>
<dbReference type="STRING" id="63737.Npun_R4006"/>
<dbReference type="EnsemblBacteria" id="ACC82385">
    <property type="protein sequence ID" value="ACC82385"/>
    <property type="gene ID" value="Npun_R4006"/>
</dbReference>
<dbReference type="KEGG" id="npu:Npun_R4006"/>
<dbReference type="eggNOG" id="COG0018">
    <property type="taxonomic scope" value="Bacteria"/>
</dbReference>
<dbReference type="HOGENOM" id="CLU_006406_5_1_3"/>
<dbReference type="OrthoDB" id="9805987at2"/>
<dbReference type="PhylomeDB" id="B2J6I0"/>
<dbReference type="Proteomes" id="UP000001191">
    <property type="component" value="Chromosome"/>
</dbReference>
<dbReference type="GO" id="GO:0005737">
    <property type="term" value="C:cytoplasm"/>
    <property type="evidence" value="ECO:0007669"/>
    <property type="project" value="UniProtKB-SubCell"/>
</dbReference>
<dbReference type="GO" id="GO:0004814">
    <property type="term" value="F:arginine-tRNA ligase activity"/>
    <property type="evidence" value="ECO:0007669"/>
    <property type="project" value="UniProtKB-UniRule"/>
</dbReference>
<dbReference type="GO" id="GO:0005524">
    <property type="term" value="F:ATP binding"/>
    <property type="evidence" value="ECO:0007669"/>
    <property type="project" value="UniProtKB-UniRule"/>
</dbReference>
<dbReference type="GO" id="GO:0006420">
    <property type="term" value="P:arginyl-tRNA aminoacylation"/>
    <property type="evidence" value="ECO:0007669"/>
    <property type="project" value="UniProtKB-UniRule"/>
</dbReference>
<dbReference type="CDD" id="cd07956">
    <property type="entry name" value="Anticodon_Ia_Arg"/>
    <property type="match status" value="1"/>
</dbReference>
<dbReference type="CDD" id="cd00671">
    <property type="entry name" value="ArgRS_core"/>
    <property type="match status" value="1"/>
</dbReference>
<dbReference type="FunFam" id="3.40.50.620:FF:000030">
    <property type="entry name" value="Arginine--tRNA ligase"/>
    <property type="match status" value="1"/>
</dbReference>
<dbReference type="FunFam" id="1.10.730.10:FF:000006">
    <property type="entry name" value="Arginyl-tRNA synthetase 2, mitochondrial"/>
    <property type="match status" value="1"/>
</dbReference>
<dbReference type="Gene3D" id="3.30.1360.70">
    <property type="entry name" value="Arginyl tRNA synthetase N-terminal domain"/>
    <property type="match status" value="1"/>
</dbReference>
<dbReference type="Gene3D" id="3.40.50.620">
    <property type="entry name" value="HUPs"/>
    <property type="match status" value="1"/>
</dbReference>
<dbReference type="Gene3D" id="1.10.730.10">
    <property type="entry name" value="Isoleucyl-tRNA Synthetase, Domain 1"/>
    <property type="match status" value="1"/>
</dbReference>
<dbReference type="HAMAP" id="MF_00123">
    <property type="entry name" value="Arg_tRNA_synth"/>
    <property type="match status" value="1"/>
</dbReference>
<dbReference type="InterPro" id="IPR001412">
    <property type="entry name" value="aa-tRNA-synth_I_CS"/>
</dbReference>
<dbReference type="InterPro" id="IPR001278">
    <property type="entry name" value="Arg-tRNA-ligase"/>
</dbReference>
<dbReference type="InterPro" id="IPR005148">
    <property type="entry name" value="Arg-tRNA-synth_N"/>
</dbReference>
<dbReference type="InterPro" id="IPR036695">
    <property type="entry name" value="Arg-tRNA-synth_N_sf"/>
</dbReference>
<dbReference type="InterPro" id="IPR035684">
    <property type="entry name" value="ArgRS_core"/>
</dbReference>
<dbReference type="InterPro" id="IPR008909">
    <property type="entry name" value="DALR_anticod-bd"/>
</dbReference>
<dbReference type="InterPro" id="IPR014729">
    <property type="entry name" value="Rossmann-like_a/b/a_fold"/>
</dbReference>
<dbReference type="InterPro" id="IPR009080">
    <property type="entry name" value="tRNAsynth_Ia_anticodon-bd"/>
</dbReference>
<dbReference type="NCBIfam" id="TIGR00456">
    <property type="entry name" value="argS"/>
    <property type="match status" value="1"/>
</dbReference>
<dbReference type="PANTHER" id="PTHR11956:SF5">
    <property type="entry name" value="ARGININE--TRNA LIGASE, CYTOPLASMIC"/>
    <property type="match status" value="1"/>
</dbReference>
<dbReference type="PANTHER" id="PTHR11956">
    <property type="entry name" value="ARGINYL-TRNA SYNTHETASE"/>
    <property type="match status" value="1"/>
</dbReference>
<dbReference type="Pfam" id="PF03485">
    <property type="entry name" value="Arg_tRNA_synt_N"/>
    <property type="match status" value="1"/>
</dbReference>
<dbReference type="Pfam" id="PF05746">
    <property type="entry name" value="DALR_1"/>
    <property type="match status" value="1"/>
</dbReference>
<dbReference type="Pfam" id="PF00750">
    <property type="entry name" value="tRNA-synt_1d"/>
    <property type="match status" value="1"/>
</dbReference>
<dbReference type="PRINTS" id="PR01038">
    <property type="entry name" value="TRNASYNTHARG"/>
</dbReference>
<dbReference type="SMART" id="SM01016">
    <property type="entry name" value="Arg_tRNA_synt_N"/>
    <property type="match status" value="1"/>
</dbReference>
<dbReference type="SMART" id="SM00836">
    <property type="entry name" value="DALR_1"/>
    <property type="match status" value="1"/>
</dbReference>
<dbReference type="SUPFAM" id="SSF47323">
    <property type="entry name" value="Anticodon-binding domain of a subclass of class I aminoacyl-tRNA synthetases"/>
    <property type="match status" value="1"/>
</dbReference>
<dbReference type="SUPFAM" id="SSF55190">
    <property type="entry name" value="Arginyl-tRNA synthetase (ArgRS), N-terminal 'additional' domain"/>
    <property type="match status" value="1"/>
</dbReference>
<dbReference type="SUPFAM" id="SSF52374">
    <property type="entry name" value="Nucleotidylyl transferase"/>
    <property type="match status" value="1"/>
</dbReference>
<dbReference type="PROSITE" id="PS00178">
    <property type="entry name" value="AA_TRNA_LIGASE_I"/>
    <property type="match status" value="1"/>
</dbReference>
<accession>B2J6I0</accession>
<comment type="catalytic activity">
    <reaction evidence="1">
        <text>tRNA(Arg) + L-arginine + ATP = L-arginyl-tRNA(Arg) + AMP + diphosphate</text>
        <dbReference type="Rhea" id="RHEA:20301"/>
        <dbReference type="Rhea" id="RHEA-COMP:9658"/>
        <dbReference type="Rhea" id="RHEA-COMP:9673"/>
        <dbReference type="ChEBI" id="CHEBI:30616"/>
        <dbReference type="ChEBI" id="CHEBI:32682"/>
        <dbReference type="ChEBI" id="CHEBI:33019"/>
        <dbReference type="ChEBI" id="CHEBI:78442"/>
        <dbReference type="ChEBI" id="CHEBI:78513"/>
        <dbReference type="ChEBI" id="CHEBI:456215"/>
        <dbReference type="EC" id="6.1.1.19"/>
    </reaction>
</comment>
<comment type="subunit">
    <text evidence="1">Monomer.</text>
</comment>
<comment type="subcellular location">
    <subcellularLocation>
        <location evidence="1">Cytoplasm</location>
    </subcellularLocation>
</comment>
<comment type="similarity">
    <text evidence="1">Belongs to the class-I aminoacyl-tRNA synthetase family.</text>
</comment>
<feature type="chain" id="PRO_1000095385" description="Arginine--tRNA ligase">
    <location>
        <begin position="1"/>
        <end position="584"/>
    </location>
</feature>
<feature type="short sequence motif" description="'HIGH' region">
    <location>
        <begin position="126"/>
        <end position="136"/>
    </location>
</feature>
<gene>
    <name evidence="1" type="primary">argS</name>
    <name type="ordered locus">Npun_R4006</name>
</gene>
<keyword id="KW-0030">Aminoacyl-tRNA synthetase</keyword>
<keyword id="KW-0067">ATP-binding</keyword>
<keyword id="KW-0963">Cytoplasm</keyword>
<keyword id="KW-0436">Ligase</keyword>
<keyword id="KW-0547">Nucleotide-binding</keyword>
<keyword id="KW-0648">Protein biosynthesis</keyword>
<keyword id="KW-1185">Reference proteome</keyword>
<proteinExistence type="inferred from homology"/>
<evidence type="ECO:0000255" key="1">
    <source>
        <dbReference type="HAMAP-Rule" id="MF_00123"/>
    </source>
</evidence>
<name>SYR_NOSP7</name>
<sequence>MNATQEKLKVQLEQALVAAFGADFAGVDPILVSASNPKFGDYQANVALSLSKKLGKQPRAIAGAIVEKLDVSEICEPPEIAGPGFINLKLKTAYLEAQLNDIQADPRLGVPAAKTPKRENVDFSSPNIAKEMHVGHLRSTIIGDSIARILEFQGHDVLRLNHVGDWGTQFGMLIAYLREVYPDALTTANALDIGDLVSFYRKAKQRFDTDTAFQETARQEVVRLQAGAEDTLHAWKLLCEQSRREFQVIYELLDIKLTERGESFYNPLLSGIVEDLEKSGLLVENQGAKCVFLEGFTNREGEPLPLIVQKSDGGYNYATTDLASLRYRIQQDQAKRIIYVTDAGQGNHFAQFFQVARKAGWIPDDVELVHVPFGLVLGEDGKKFKTRSGDTVRLRDLLDEAVSHAHADLKTRLQKEERQETEEFINEVARVVGISAVKYADLSQNRTSNYIFSYDKMLDLKGNTAPYMLYVYARIHGISRKGDINFKELGNNAVLLQHETELALAKYLLQLDEVISSVEQDLLPNRLCEYLFELSQKFNQFYDRCSILQAEEPQRTSRLVLCDLTARTLKLGLSLLGIQVLERM</sequence>